<name>LMD2B_DICDI</name>
<organism>
    <name type="scientific">Dictyostelium discoideum</name>
    <name type="common">Social amoeba</name>
    <dbReference type="NCBI Taxonomy" id="44689"/>
    <lineage>
        <taxon>Eukaryota</taxon>
        <taxon>Amoebozoa</taxon>
        <taxon>Evosea</taxon>
        <taxon>Eumycetozoa</taxon>
        <taxon>Dictyostelia</taxon>
        <taxon>Dictyosteliales</taxon>
        <taxon>Dictyosteliaceae</taxon>
        <taxon>Dictyostelium</taxon>
    </lineage>
</organism>
<sequence length="790" mass="88926">MSSNTTTPTPTSTPTPTSSPSIGPVPIPYESASFGNLLFFAISLVLCGVVVLIGMKQYISLKRTPIYATFFSFLGWFMCFSIAYLVPLDIIVTDHLQCVIENNETLTGECEIPVTYLPYGMITQQWRFLYFGSLILCWVIFPVLQSFSTAGDFRFWERVKRATKENVILYTFMFIAGLIGIIVILSVKEMDPSSFLSFVMLLANVYGVILITITMGYGLIDVPRNLLRKGSHYAILRNYRVEAVVLKTELEDVKRQLIDHLKLIKTISDRAGQYDPFRIYLDVIISKCPTEYDVLIQEYHAEPLPAGMEAEILSYKYLVGIHSTLLDLVDRNHSAEVLYERLLGKAFAIEDIIETRERNKQTAGNNQIAGEERSIQWSFKSTKSNGKFEYLWHMYIHPWYFIIAGLVCVCLSGIILWSEIVLALVSNPDYSPFYRAIVRMEPGIGLQIFCFIPMIYMCVCSYSTLFKLRISNYYRLVPQQSNTFSIMFSANYLCRLAAPLAYNFIQICHVNQDNSIVSPFSKIMGDMNAFGDNALGKRFTLFFPIFMIVVCVISFFNLHKRLAGSCCIRSLRIVTDTSEGAVDHGLKILKQEREERSLTGGVAPVKTRMSIVKEMFTKKKGAGILVTDNSQLDGASGAHREPSIDSSNRYKPTPTKTSINIPKLSRTYTSAAGNVYSSTQDGDENSNSGIKPINSFFSSILGEKGNASNNNNNNNNNNNNNNSNNKNSNNNNNSILTSNYESYSTPRTKDKQGLLSSALDKMDFSFQDDDDHTFDDIEMGAYGTGRKNKK</sequence>
<accession>Q54TM2</accession>
<comment type="subcellular location">
    <subcellularLocation>
        <location evidence="3">Membrane</location>
        <topology evidence="3">Multi-pass membrane protein</topology>
    </subcellularLocation>
</comment>
<comment type="similarity">
    <text evidence="3">Belongs to the LIMR family.</text>
</comment>
<protein>
    <recommendedName>
        <fullName>LMBR1 domain-containing protein 2 homolog B</fullName>
    </recommendedName>
</protein>
<reference key="1">
    <citation type="journal article" date="2005" name="Nature">
        <title>The genome of the social amoeba Dictyostelium discoideum.</title>
        <authorList>
            <person name="Eichinger L."/>
            <person name="Pachebat J.A."/>
            <person name="Gloeckner G."/>
            <person name="Rajandream M.A."/>
            <person name="Sucgang R."/>
            <person name="Berriman M."/>
            <person name="Song J."/>
            <person name="Olsen R."/>
            <person name="Szafranski K."/>
            <person name="Xu Q."/>
            <person name="Tunggal B."/>
            <person name="Kummerfeld S."/>
            <person name="Madera M."/>
            <person name="Konfortov B.A."/>
            <person name="Rivero F."/>
            <person name="Bankier A.T."/>
            <person name="Lehmann R."/>
            <person name="Hamlin N."/>
            <person name="Davies R."/>
            <person name="Gaudet P."/>
            <person name="Fey P."/>
            <person name="Pilcher K."/>
            <person name="Chen G."/>
            <person name="Saunders D."/>
            <person name="Sodergren E.J."/>
            <person name="Davis P."/>
            <person name="Kerhornou A."/>
            <person name="Nie X."/>
            <person name="Hall N."/>
            <person name="Anjard C."/>
            <person name="Hemphill L."/>
            <person name="Bason N."/>
            <person name="Farbrother P."/>
            <person name="Desany B."/>
            <person name="Just E."/>
            <person name="Morio T."/>
            <person name="Rost R."/>
            <person name="Churcher C.M."/>
            <person name="Cooper J."/>
            <person name="Haydock S."/>
            <person name="van Driessche N."/>
            <person name="Cronin A."/>
            <person name="Goodhead I."/>
            <person name="Muzny D.M."/>
            <person name="Mourier T."/>
            <person name="Pain A."/>
            <person name="Lu M."/>
            <person name="Harper D."/>
            <person name="Lindsay R."/>
            <person name="Hauser H."/>
            <person name="James K.D."/>
            <person name="Quiles M."/>
            <person name="Madan Babu M."/>
            <person name="Saito T."/>
            <person name="Buchrieser C."/>
            <person name="Wardroper A."/>
            <person name="Felder M."/>
            <person name="Thangavelu M."/>
            <person name="Johnson D."/>
            <person name="Knights A."/>
            <person name="Loulseged H."/>
            <person name="Mungall K.L."/>
            <person name="Oliver K."/>
            <person name="Price C."/>
            <person name="Quail M.A."/>
            <person name="Urushihara H."/>
            <person name="Hernandez J."/>
            <person name="Rabbinowitsch E."/>
            <person name="Steffen D."/>
            <person name="Sanders M."/>
            <person name="Ma J."/>
            <person name="Kohara Y."/>
            <person name="Sharp S."/>
            <person name="Simmonds M.N."/>
            <person name="Spiegler S."/>
            <person name="Tivey A."/>
            <person name="Sugano S."/>
            <person name="White B."/>
            <person name="Walker D."/>
            <person name="Woodward J.R."/>
            <person name="Winckler T."/>
            <person name="Tanaka Y."/>
            <person name="Shaulsky G."/>
            <person name="Schleicher M."/>
            <person name="Weinstock G.M."/>
            <person name="Rosenthal A."/>
            <person name="Cox E.C."/>
            <person name="Chisholm R.L."/>
            <person name="Gibbs R.A."/>
            <person name="Loomis W.F."/>
            <person name="Platzer M."/>
            <person name="Kay R.R."/>
            <person name="Williams J.G."/>
            <person name="Dear P.H."/>
            <person name="Noegel A.A."/>
            <person name="Barrell B.G."/>
            <person name="Kuspa A."/>
        </authorList>
    </citation>
    <scope>NUCLEOTIDE SEQUENCE [LARGE SCALE GENOMIC DNA]</scope>
    <source>
        <strain>AX4</strain>
    </source>
</reference>
<dbReference type="EMBL" id="AAFI02000042">
    <property type="protein sequence ID" value="EAL66596.1"/>
    <property type="molecule type" value="Genomic_DNA"/>
</dbReference>
<dbReference type="RefSeq" id="XP_640569.1">
    <property type="nucleotide sequence ID" value="XM_635477.1"/>
</dbReference>
<dbReference type="SMR" id="Q54TM2"/>
<dbReference type="FunCoup" id="Q54TM2">
    <property type="interactions" value="37"/>
</dbReference>
<dbReference type="STRING" id="44689.Q54TM2"/>
<dbReference type="GlyGen" id="Q54TM2">
    <property type="glycosylation" value="1 site"/>
</dbReference>
<dbReference type="PaxDb" id="44689-DDB0204597"/>
<dbReference type="EnsemblProtists" id="EAL66596">
    <property type="protein sequence ID" value="EAL66596"/>
    <property type="gene ID" value="DDB_G0281669"/>
</dbReference>
<dbReference type="GeneID" id="8623178"/>
<dbReference type="KEGG" id="ddi:DDB_G0281669"/>
<dbReference type="dictyBase" id="DDB_G0281669">
    <property type="gene designation" value="lmbd2B"/>
</dbReference>
<dbReference type="VEuPathDB" id="AmoebaDB:DDB_G0281669"/>
<dbReference type="eggNOG" id="KOG2296">
    <property type="taxonomic scope" value="Eukaryota"/>
</dbReference>
<dbReference type="HOGENOM" id="CLU_355438_0_0_1"/>
<dbReference type="InParanoid" id="Q54TM2"/>
<dbReference type="PhylomeDB" id="Q54TM2"/>
<dbReference type="PRO" id="PR:Q54TM2"/>
<dbReference type="Proteomes" id="UP000002195">
    <property type="component" value="Chromosome 3"/>
</dbReference>
<dbReference type="GO" id="GO:0071944">
    <property type="term" value="C:cell periphery"/>
    <property type="evidence" value="ECO:0000314"/>
    <property type="project" value="dictyBase"/>
</dbReference>
<dbReference type="GO" id="GO:0031941">
    <property type="term" value="C:filamentous actin"/>
    <property type="evidence" value="ECO:0000314"/>
    <property type="project" value="dictyBase"/>
</dbReference>
<dbReference type="GO" id="GO:0016020">
    <property type="term" value="C:membrane"/>
    <property type="evidence" value="ECO:0000318"/>
    <property type="project" value="GO_Central"/>
</dbReference>
<dbReference type="GO" id="GO:0005886">
    <property type="term" value="C:plasma membrane"/>
    <property type="evidence" value="ECO:0000314"/>
    <property type="project" value="dictyBase"/>
</dbReference>
<dbReference type="GO" id="GO:0001726">
    <property type="term" value="C:ruffle"/>
    <property type="evidence" value="ECO:0000314"/>
    <property type="project" value="dictyBase"/>
</dbReference>
<dbReference type="GO" id="GO:0016477">
    <property type="term" value="P:cell migration"/>
    <property type="evidence" value="ECO:0000315"/>
    <property type="project" value="dictyBase"/>
</dbReference>
<dbReference type="GO" id="GO:0006935">
    <property type="term" value="P:chemotaxis"/>
    <property type="evidence" value="ECO:0000315"/>
    <property type="project" value="dictyBase"/>
</dbReference>
<dbReference type="GO" id="GO:0006897">
    <property type="term" value="P:endocytosis"/>
    <property type="evidence" value="ECO:0000270"/>
    <property type="project" value="dictyBase"/>
</dbReference>
<dbReference type="GO" id="GO:0031268">
    <property type="term" value="P:pseudopodium organization"/>
    <property type="evidence" value="ECO:0000315"/>
    <property type="project" value="dictyBase"/>
</dbReference>
<dbReference type="InterPro" id="IPR051584">
    <property type="entry name" value="GPCR-associated_LMBR1"/>
</dbReference>
<dbReference type="InterPro" id="IPR006876">
    <property type="entry name" value="LMBR1-like_membr_prot"/>
</dbReference>
<dbReference type="PANTHER" id="PTHR21355">
    <property type="entry name" value="G-PROTEIN COUPLED RECEPTOR-ASSOCIATED PROTEIN LMBRD2"/>
    <property type="match status" value="1"/>
</dbReference>
<dbReference type="PANTHER" id="PTHR21355:SF11">
    <property type="entry name" value="LMBR1 DOMAIN-CONTAINING PROTEIN 2 HOMOLOG B"/>
    <property type="match status" value="1"/>
</dbReference>
<dbReference type="Pfam" id="PF04791">
    <property type="entry name" value="LMBR1"/>
    <property type="match status" value="1"/>
</dbReference>
<gene>
    <name type="ORF">DDB_G0281669</name>
</gene>
<evidence type="ECO:0000255" key="1"/>
<evidence type="ECO:0000256" key="2">
    <source>
        <dbReference type="SAM" id="MobiDB-lite"/>
    </source>
</evidence>
<evidence type="ECO:0000305" key="3"/>
<feature type="chain" id="PRO_0000339414" description="LMBR1 domain-containing protein 2 homolog B">
    <location>
        <begin position="1"/>
        <end position="790"/>
    </location>
</feature>
<feature type="transmembrane region" description="Helical" evidence="1">
    <location>
        <begin position="34"/>
        <end position="54"/>
    </location>
</feature>
<feature type="transmembrane region" description="Helical" evidence="1">
    <location>
        <begin position="66"/>
        <end position="86"/>
    </location>
</feature>
<feature type="transmembrane region" description="Helical" evidence="1">
    <location>
        <begin position="128"/>
        <end position="148"/>
    </location>
</feature>
<feature type="transmembrane region" description="Helical" evidence="1">
    <location>
        <begin position="167"/>
        <end position="187"/>
    </location>
</feature>
<feature type="transmembrane region" description="Helical" evidence="1">
    <location>
        <begin position="195"/>
        <end position="215"/>
    </location>
</feature>
<feature type="transmembrane region" description="Helical" evidence="1">
    <location>
        <begin position="401"/>
        <end position="421"/>
    </location>
</feature>
<feature type="transmembrane region" description="Helical" evidence="1">
    <location>
        <begin position="442"/>
        <end position="462"/>
    </location>
</feature>
<feature type="transmembrane region" description="Helical" evidence="1">
    <location>
        <begin position="539"/>
        <end position="559"/>
    </location>
</feature>
<feature type="region of interest" description="Disordered" evidence="2">
    <location>
        <begin position="1"/>
        <end position="22"/>
    </location>
</feature>
<feature type="region of interest" description="Disordered" evidence="2">
    <location>
        <begin position="630"/>
        <end position="665"/>
    </location>
</feature>
<feature type="region of interest" description="Disordered" evidence="2">
    <location>
        <begin position="701"/>
        <end position="751"/>
    </location>
</feature>
<feature type="region of interest" description="Disordered" evidence="2">
    <location>
        <begin position="765"/>
        <end position="790"/>
    </location>
</feature>
<feature type="coiled-coil region" evidence="1">
    <location>
        <begin position="236"/>
        <end position="266"/>
    </location>
</feature>
<feature type="compositionally biased region" description="Low complexity" evidence="2">
    <location>
        <begin position="1"/>
        <end position="21"/>
    </location>
</feature>
<feature type="compositionally biased region" description="Polar residues" evidence="2">
    <location>
        <begin position="644"/>
        <end position="665"/>
    </location>
</feature>
<feature type="compositionally biased region" description="Low complexity" evidence="2">
    <location>
        <begin position="706"/>
        <end position="734"/>
    </location>
</feature>
<feature type="compositionally biased region" description="Polar residues" evidence="2">
    <location>
        <begin position="735"/>
        <end position="746"/>
    </location>
</feature>
<feature type="compositionally biased region" description="Acidic residues" evidence="2">
    <location>
        <begin position="766"/>
        <end position="778"/>
    </location>
</feature>
<keyword id="KW-0175">Coiled coil</keyword>
<keyword id="KW-0472">Membrane</keyword>
<keyword id="KW-1185">Reference proteome</keyword>
<keyword id="KW-0812">Transmembrane</keyword>
<keyword id="KW-1133">Transmembrane helix</keyword>
<proteinExistence type="inferred from homology"/>